<keyword id="KW-0997">Cell inner membrane</keyword>
<keyword id="KW-1003">Cell membrane</keyword>
<keyword id="KW-0472">Membrane</keyword>
<keyword id="KW-1185">Reference proteome</keyword>
<keyword id="KW-0812">Transmembrane</keyword>
<keyword id="KW-1133">Transmembrane helix</keyword>
<keyword id="KW-0813">Transport</keyword>
<organism>
    <name type="scientific">Erwinia tasmaniensis (strain DSM 17950 / CFBP 7177 / CIP 109463 / NCPPB 4357 / Et1/99)</name>
    <dbReference type="NCBI Taxonomy" id="465817"/>
    <lineage>
        <taxon>Bacteria</taxon>
        <taxon>Pseudomonadati</taxon>
        <taxon>Pseudomonadota</taxon>
        <taxon>Gammaproteobacteria</taxon>
        <taxon>Enterobacterales</taxon>
        <taxon>Erwiniaceae</taxon>
        <taxon>Erwinia</taxon>
    </lineage>
</organism>
<accession>B2VFQ4</accession>
<feature type="chain" id="PRO_1000145674" description="Multidrug resistance protein MdtC">
    <location>
        <begin position="1"/>
        <end position="1024"/>
    </location>
</feature>
<feature type="transmembrane region" description="Helical" evidence="1">
    <location>
        <begin position="15"/>
        <end position="35"/>
    </location>
</feature>
<feature type="transmembrane region" description="Helical" evidence="1">
    <location>
        <begin position="333"/>
        <end position="353"/>
    </location>
</feature>
<feature type="transmembrane region" description="Helical" evidence="1">
    <location>
        <begin position="360"/>
        <end position="380"/>
    </location>
</feature>
<feature type="transmembrane region" description="Helical" evidence="1">
    <location>
        <begin position="387"/>
        <end position="407"/>
    </location>
</feature>
<feature type="transmembrane region" description="Helical" evidence="1">
    <location>
        <begin position="431"/>
        <end position="451"/>
    </location>
</feature>
<feature type="transmembrane region" description="Helical" evidence="1">
    <location>
        <begin position="463"/>
        <end position="483"/>
    </location>
</feature>
<feature type="transmembrane region" description="Helical" evidence="1">
    <location>
        <begin position="528"/>
        <end position="548"/>
    </location>
</feature>
<feature type="transmembrane region" description="Helical" evidence="1">
    <location>
        <begin position="853"/>
        <end position="873"/>
    </location>
</feature>
<feature type="transmembrane region" description="Helical" evidence="1">
    <location>
        <begin position="897"/>
        <end position="917"/>
    </location>
</feature>
<feature type="transmembrane region" description="Helical" evidence="1">
    <location>
        <begin position="953"/>
        <end position="973"/>
    </location>
</feature>
<feature type="transmembrane region" description="Helical" evidence="1">
    <location>
        <begin position="984"/>
        <end position="1004"/>
    </location>
</feature>
<dbReference type="EMBL" id="CU468135">
    <property type="protein sequence ID" value="CAO96356.1"/>
    <property type="molecule type" value="Genomic_DNA"/>
</dbReference>
<dbReference type="RefSeq" id="WP_012441050.1">
    <property type="nucleotide sequence ID" value="NC_010694.1"/>
</dbReference>
<dbReference type="SMR" id="B2VFQ4"/>
<dbReference type="STRING" id="465817.ETA_13100"/>
<dbReference type="KEGG" id="eta:ETA_13100"/>
<dbReference type="eggNOG" id="COG0841">
    <property type="taxonomic scope" value="Bacteria"/>
</dbReference>
<dbReference type="HOGENOM" id="CLU_002755_1_2_6"/>
<dbReference type="OrthoDB" id="9757904at2"/>
<dbReference type="Proteomes" id="UP000001726">
    <property type="component" value="Chromosome"/>
</dbReference>
<dbReference type="GO" id="GO:0005886">
    <property type="term" value="C:plasma membrane"/>
    <property type="evidence" value="ECO:0007669"/>
    <property type="project" value="UniProtKB-SubCell"/>
</dbReference>
<dbReference type="GO" id="GO:0042910">
    <property type="term" value="F:xenobiotic transmembrane transporter activity"/>
    <property type="evidence" value="ECO:0007669"/>
    <property type="project" value="TreeGrafter"/>
</dbReference>
<dbReference type="FunFam" id="1.20.1640.10:FF:000001">
    <property type="entry name" value="Efflux pump membrane transporter"/>
    <property type="match status" value="1"/>
</dbReference>
<dbReference type="FunFam" id="3.30.70.1430:FF:000001">
    <property type="entry name" value="Efflux pump membrane transporter"/>
    <property type="match status" value="1"/>
</dbReference>
<dbReference type="FunFam" id="3.30.2090.10:FF:000004">
    <property type="entry name" value="Multidrug resistance protein MdtC"/>
    <property type="match status" value="1"/>
</dbReference>
<dbReference type="Gene3D" id="3.30.70.1430">
    <property type="entry name" value="Multidrug efflux transporter AcrB pore domain"/>
    <property type="match status" value="2"/>
</dbReference>
<dbReference type="Gene3D" id="3.30.70.1440">
    <property type="entry name" value="Multidrug efflux transporter AcrB pore domain"/>
    <property type="match status" value="1"/>
</dbReference>
<dbReference type="Gene3D" id="3.30.70.1320">
    <property type="entry name" value="Multidrug efflux transporter AcrB pore domain like"/>
    <property type="match status" value="1"/>
</dbReference>
<dbReference type="Gene3D" id="3.30.2090.10">
    <property type="entry name" value="Multidrug efflux transporter AcrB TolC docking domain, DN and DC subdomains"/>
    <property type="match status" value="2"/>
</dbReference>
<dbReference type="Gene3D" id="1.20.1640.10">
    <property type="entry name" value="Multidrug efflux transporter AcrB transmembrane domain"/>
    <property type="match status" value="2"/>
</dbReference>
<dbReference type="HAMAP" id="MF_01424">
    <property type="entry name" value="MdtC"/>
    <property type="match status" value="1"/>
</dbReference>
<dbReference type="InterPro" id="IPR027463">
    <property type="entry name" value="AcrB_DN_DC_subdom"/>
</dbReference>
<dbReference type="InterPro" id="IPR001036">
    <property type="entry name" value="Acrflvin-R"/>
</dbReference>
<dbReference type="InterPro" id="IPR023931">
    <property type="entry name" value="Multidrug-R_MdtC"/>
</dbReference>
<dbReference type="NCBIfam" id="NF007905">
    <property type="entry name" value="PRK10614.1"/>
    <property type="match status" value="1"/>
</dbReference>
<dbReference type="NCBIfam" id="NF033617">
    <property type="entry name" value="RND_permease_2"/>
    <property type="match status" value="1"/>
</dbReference>
<dbReference type="PANTHER" id="PTHR32063">
    <property type="match status" value="1"/>
</dbReference>
<dbReference type="PANTHER" id="PTHR32063:SF34">
    <property type="entry name" value="MULTIDRUG RESISTANCE PROTEIN MDTC"/>
    <property type="match status" value="1"/>
</dbReference>
<dbReference type="Pfam" id="PF00873">
    <property type="entry name" value="ACR_tran"/>
    <property type="match status" value="1"/>
</dbReference>
<dbReference type="PRINTS" id="PR00702">
    <property type="entry name" value="ACRIFLAVINRP"/>
</dbReference>
<dbReference type="SUPFAM" id="SSF82693">
    <property type="entry name" value="Multidrug efflux transporter AcrB pore domain, PN1, PN2, PC1 and PC2 subdomains"/>
    <property type="match status" value="3"/>
</dbReference>
<dbReference type="SUPFAM" id="SSF82714">
    <property type="entry name" value="Multidrug efflux transporter AcrB TolC docking domain, DN and DC subdomains"/>
    <property type="match status" value="2"/>
</dbReference>
<dbReference type="SUPFAM" id="SSF82866">
    <property type="entry name" value="Multidrug efflux transporter AcrB transmembrane domain"/>
    <property type="match status" value="2"/>
</dbReference>
<name>MDTC_ERWT9</name>
<sequence length="1024" mass="111048">MRFFSLFIHRPVATWLLTLTIVLAGFLGFRLLPVAPLPQVDFPVIVVTASLPGASPEIMASSVATPLERALGRIAGVSEMTSSSSLGSTHVILLFDFDRDINGAARDVQGAINAAQSLLPSGMPNRPSYRKVNPSDAPIMIMTLTSDTYSPGQLYDYASTKLAQRLAQIDGVGDVTVGGSSLPAVRVDLNPQALFNQGVSLDAVRSTIANANVRKPQGAIEDSQLRWWIKTNDELHTAAEYRPLVIHYRNGAAVRLQDVATVTDSVQDVRNAGMSNARPAVLLVIRKSPQANIIDTVDRIRGEVPELRNTLPASIGLDIAQDSSRTIRASLHEVEQSLAISVGLVVLVVFAFLRSGRATLIPAVAVPVSLIGTFAAMYLCGFSLNNLSLMALTVATGFVVDDAIVVLENISRHVEAGMKPLLAALKGVREVGFTVISMSISLVAVFLPLLLMDGIIGRFFKEFAITLSVSIAISLVISLTLTPMMCARLLRPNAPRQQPRLRGFGRILMAIQRGYGRGLHWVLDHARWGLLVFVATLGLTVYLYISIPKTFMPEQDTGRLMGFIQADQSISFQAMRGKLETFMRIVRDDPAVESVVGFTGGSDTNSGSMFIALKPLSARSDNAQQVISRLREKLTKEPGANLWLMAVQDIRIGARQSNAGYQYSLLSDSLDDLRQWEPKIRRAFSALPELVDVNSDQQDKGAEMALTYDRTSMARLGIDVADVNDLLNNAFGQRQISTIYQPLNQYKVVMGVDPRYSQDISALNQMYLINKEGRSIPLSAFAKWQPANAPLSVEHEGLSAASTISFNLPEGVSLSQASAAIERSVTSLGVPASVRGSFSGTAAVFEQTQSSQLWLILAAIATVYIVLGILYESYVHPLTILSTLPSAGVGALLALELFNAPFSLIALIGILLLIGIVKKNAIMMVDFALQAQRQEGMTAREAIFQASLLRFRPIIMTTLAALLGALPLALGSGDGAELRQPLGITIVGGLVMSQLLTLFTTPVVYLYMDKLRRRPRWLPVEEKS</sequence>
<comment type="subunit">
    <text evidence="1">Part of a tripartite efflux system composed of MdtA, MdtB and MdtC. MdtC forms a heteromultimer with MdtB.</text>
</comment>
<comment type="subcellular location">
    <subcellularLocation>
        <location evidence="1">Cell inner membrane</location>
        <topology evidence="1">Multi-pass membrane protein</topology>
    </subcellularLocation>
</comment>
<comment type="similarity">
    <text evidence="1">Belongs to the resistance-nodulation-cell division (RND) (TC 2.A.6) family. MdtC subfamily.</text>
</comment>
<reference key="1">
    <citation type="journal article" date="2008" name="Environ. Microbiol.">
        <title>The genome of Erwinia tasmaniensis strain Et1/99, a non-pathogenic bacterium in the genus Erwinia.</title>
        <authorList>
            <person name="Kube M."/>
            <person name="Migdoll A.M."/>
            <person name="Mueller I."/>
            <person name="Kuhl H."/>
            <person name="Beck A."/>
            <person name="Reinhardt R."/>
            <person name="Geider K."/>
        </authorList>
    </citation>
    <scope>NUCLEOTIDE SEQUENCE [LARGE SCALE GENOMIC DNA]</scope>
    <source>
        <strain>DSM 17950 / CFBP 7177 / CIP 109463 / NCPPB 4357 / Et1/99</strain>
    </source>
</reference>
<evidence type="ECO:0000255" key="1">
    <source>
        <dbReference type="HAMAP-Rule" id="MF_01424"/>
    </source>
</evidence>
<gene>
    <name evidence="1" type="primary">mdtC</name>
    <name type="ordered locus">ETA_13100</name>
</gene>
<proteinExistence type="inferred from homology"/>
<protein>
    <recommendedName>
        <fullName evidence="1">Multidrug resistance protein MdtC</fullName>
    </recommendedName>
    <alternativeName>
        <fullName evidence="1">Multidrug transporter MdtC</fullName>
    </alternativeName>
</protein>